<protein>
    <recommendedName>
        <fullName evidence="1">RNA 3'-terminal phosphate cyclase</fullName>
        <shortName evidence="1">RNA cyclase</shortName>
        <shortName evidence="1">RNA-3'-phosphate cyclase</shortName>
        <ecNumber evidence="1">6.5.1.4</ecNumber>
    </recommendedName>
</protein>
<sequence length="338" mass="35903">MKRMIALDGAQGEGGGQILRSALSLSMITGQPFTITSIRAGRAKPGLLRQHLTAVKAATEICGATVEGAELGSQRLLFRPGTVRGGDYRFAIGSAGSCTLVLQTVLPALWFADGPSRVEVSGGTDNPSAPPADFIRRVLEPLLAKIGIHQQTTLLRHGFYPAGGGVVATEVSPVASFNTLQLGERGNIVQMRGEVLLAGVPRHVAEREIATLAGSFSLHEQNIHNLPRDQGPGNTVSLEVESENITERFFVVGEKRVSAEVVAAQLVKEVKRYLASTAAVGEYLADQLVLPMALAGAGEFTVAHPSCHLLTNIAVVERFLPVRFSLIETDGVTRVSIE</sequence>
<keyword id="KW-0067">ATP-binding</keyword>
<keyword id="KW-0963">Cytoplasm</keyword>
<keyword id="KW-0436">Ligase</keyword>
<keyword id="KW-0547">Nucleotide-binding</keyword>
<accession>C4ZVX1</accession>
<reference key="1">
    <citation type="journal article" date="2009" name="J. Bacteriol.">
        <title>Genomic sequencing reveals regulatory mutations and recombinational events in the widely used MC4100 lineage of Escherichia coli K-12.</title>
        <authorList>
            <person name="Ferenci T."/>
            <person name="Zhou Z."/>
            <person name="Betteridge T."/>
            <person name="Ren Y."/>
            <person name="Liu Y."/>
            <person name="Feng L."/>
            <person name="Reeves P.R."/>
            <person name="Wang L."/>
        </authorList>
    </citation>
    <scope>NUCLEOTIDE SEQUENCE [LARGE SCALE GENOMIC DNA]</scope>
    <source>
        <strain>K12 / MC4100 / BW2952</strain>
    </source>
</reference>
<proteinExistence type="inferred from homology"/>
<dbReference type="EC" id="6.5.1.4" evidence="1"/>
<dbReference type="EMBL" id="CP001396">
    <property type="protein sequence ID" value="ACR65489.1"/>
    <property type="molecule type" value="Genomic_DNA"/>
</dbReference>
<dbReference type="RefSeq" id="WP_001335950.1">
    <property type="nucleotide sequence ID" value="NC_012759.1"/>
</dbReference>
<dbReference type="SMR" id="C4ZVX1"/>
<dbReference type="KEGG" id="ebw:BWG_3113"/>
<dbReference type="HOGENOM" id="CLU_027882_0_0_6"/>
<dbReference type="GO" id="GO:0005737">
    <property type="term" value="C:cytoplasm"/>
    <property type="evidence" value="ECO:0007669"/>
    <property type="project" value="UniProtKB-SubCell"/>
</dbReference>
<dbReference type="GO" id="GO:0005524">
    <property type="term" value="F:ATP binding"/>
    <property type="evidence" value="ECO:0007669"/>
    <property type="project" value="UniProtKB-KW"/>
</dbReference>
<dbReference type="GO" id="GO:0003963">
    <property type="term" value="F:RNA-3'-phosphate cyclase activity"/>
    <property type="evidence" value="ECO:0007669"/>
    <property type="project" value="UniProtKB-UniRule"/>
</dbReference>
<dbReference type="GO" id="GO:0006396">
    <property type="term" value="P:RNA processing"/>
    <property type="evidence" value="ECO:0007669"/>
    <property type="project" value="InterPro"/>
</dbReference>
<dbReference type="CDD" id="cd00295">
    <property type="entry name" value="RNA_Cyclase"/>
    <property type="match status" value="1"/>
</dbReference>
<dbReference type="FunFam" id="3.65.10.20:FF:000002">
    <property type="entry name" value="GM19193"/>
    <property type="match status" value="1"/>
</dbReference>
<dbReference type="FunFam" id="3.30.360.20:FF:000003">
    <property type="entry name" value="RNA 3'-terminal phosphate cyclase"/>
    <property type="match status" value="1"/>
</dbReference>
<dbReference type="Gene3D" id="3.65.10.20">
    <property type="entry name" value="RNA 3'-terminal phosphate cyclase domain"/>
    <property type="match status" value="1"/>
</dbReference>
<dbReference type="Gene3D" id="3.30.360.20">
    <property type="entry name" value="RNA 3'-terminal phosphate cyclase, insert domain"/>
    <property type="match status" value="1"/>
</dbReference>
<dbReference type="HAMAP" id="MF_00200">
    <property type="entry name" value="RTC"/>
    <property type="match status" value="1"/>
</dbReference>
<dbReference type="InterPro" id="IPR013791">
    <property type="entry name" value="RNA3'-term_phos_cycl_insert"/>
</dbReference>
<dbReference type="InterPro" id="IPR023797">
    <property type="entry name" value="RNA3'_phos_cyclase_dom"/>
</dbReference>
<dbReference type="InterPro" id="IPR037136">
    <property type="entry name" value="RNA3'_phos_cyclase_dom_sf"/>
</dbReference>
<dbReference type="InterPro" id="IPR000228">
    <property type="entry name" value="RNA3'_term_phos_cyc"/>
</dbReference>
<dbReference type="InterPro" id="IPR017770">
    <property type="entry name" value="RNA3'_term_phos_cyc_type_1"/>
</dbReference>
<dbReference type="InterPro" id="IPR020719">
    <property type="entry name" value="RNA3'_term_phos_cycl-like_CS"/>
</dbReference>
<dbReference type="InterPro" id="IPR013792">
    <property type="entry name" value="RNA3'P_cycl/enolpyr_Trfase_a/b"/>
</dbReference>
<dbReference type="InterPro" id="IPR036553">
    <property type="entry name" value="RPTC_insert"/>
</dbReference>
<dbReference type="NCBIfam" id="NF003246">
    <property type="entry name" value="PRK04204.1-2"/>
    <property type="match status" value="1"/>
</dbReference>
<dbReference type="NCBIfam" id="NF003247">
    <property type="entry name" value="PRK04204.1-3"/>
    <property type="match status" value="1"/>
</dbReference>
<dbReference type="NCBIfam" id="TIGR03399">
    <property type="entry name" value="RNA_3prim_cycl"/>
    <property type="match status" value="1"/>
</dbReference>
<dbReference type="PANTHER" id="PTHR11096">
    <property type="entry name" value="RNA 3' TERMINAL PHOSPHATE CYCLASE"/>
    <property type="match status" value="1"/>
</dbReference>
<dbReference type="PANTHER" id="PTHR11096:SF0">
    <property type="entry name" value="RNA 3'-TERMINAL PHOSPHATE CYCLASE"/>
    <property type="match status" value="1"/>
</dbReference>
<dbReference type="Pfam" id="PF01137">
    <property type="entry name" value="RTC"/>
    <property type="match status" value="1"/>
</dbReference>
<dbReference type="Pfam" id="PF05189">
    <property type="entry name" value="RTC_insert"/>
    <property type="match status" value="1"/>
</dbReference>
<dbReference type="PIRSF" id="PIRSF005378">
    <property type="entry name" value="RNA3'_term_phos_cycl_euk"/>
    <property type="match status" value="1"/>
</dbReference>
<dbReference type="SUPFAM" id="SSF55205">
    <property type="entry name" value="EPT/RTPC-like"/>
    <property type="match status" value="2"/>
</dbReference>
<dbReference type="SUPFAM" id="SSF52913">
    <property type="entry name" value="RNA 3'-terminal phosphate cyclase, RPTC, insert domain"/>
    <property type="match status" value="1"/>
</dbReference>
<dbReference type="PROSITE" id="PS01287">
    <property type="entry name" value="RTC"/>
    <property type="match status" value="1"/>
</dbReference>
<comment type="function">
    <text evidence="1">Catalyzes the conversion of 3'-phosphate to a 2',3'-cyclic phosphodiester at the end of RNA. The mechanism of action of the enzyme occurs in 3 steps: (A) adenylation of the enzyme by ATP; (B) transfer of adenylate to an RNA-N3'P to produce RNA-N3'PP5'A; (C) and attack of the adjacent 2'-hydroxyl on the 3'-phosphorus in the diester linkage to produce the cyclic end product. The biological role of this enzyme is unknown but it is likely to function in some aspects of cellular RNA processing.</text>
</comment>
<comment type="catalytic activity">
    <reaction evidence="1">
        <text>a 3'-end 3'-phospho-ribonucleotide-RNA + ATP = a 3'-end 2',3'-cyclophospho-ribonucleotide-RNA + AMP + diphosphate</text>
        <dbReference type="Rhea" id="RHEA:23976"/>
        <dbReference type="Rhea" id="RHEA-COMP:10463"/>
        <dbReference type="Rhea" id="RHEA-COMP:10464"/>
        <dbReference type="ChEBI" id="CHEBI:30616"/>
        <dbReference type="ChEBI" id="CHEBI:33019"/>
        <dbReference type="ChEBI" id="CHEBI:83062"/>
        <dbReference type="ChEBI" id="CHEBI:83064"/>
        <dbReference type="ChEBI" id="CHEBI:456215"/>
        <dbReference type="EC" id="6.5.1.4"/>
    </reaction>
</comment>
<comment type="subcellular location">
    <subcellularLocation>
        <location evidence="1">Cytoplasm</location>
    </subcellularLocation>
</comment>
<comment type="similarity">
    <text evidence="1">Belongs to the RNA 3'-terminal cyclase family. Type 1 subfamily.</text>
</comment>
<feature type="chain" id="PRO_1000204091" description="RNA 3'-terminal phosphate cyclase">
    <location>
        <begin position="1"/>
        <end position="338"/>
    </location>
</feature>
<feature type="active site" description="Tele-AMP-histidine intermediate" evidence="1">
    <location>
        <position position="308"/>
    </location>
</feature>
<feature type="binding site" evidence="1">
    <location>
        <position position="103"/>
    </location>
    <ligand>
        <name>ATP</name>
        <dbReference type="ChEBI" id="CHEBI:30616"/>
    </ligand>
</feature>
<feature type="binding site" evidence="1">
    <location>
        <begin position="283"/>
        <end position="287"/>
    </location>
    <ligand>
        <name>ATP</name>
        <dbReference type="ChEBI" id="CHEBI:30616"/>
    </ligand>
</feature>
<name>RTCA_ECOBW</name>
<gene>
    <name evidence="1" type="primary">rtcA</name>
    <name type="ordered locus">BWG_3113</name>
</gene>
<organism>
    <name type="scientific">Escherichia coli (strain K12 / MC4100 / BW2952)</name>
    <dbReference type="NCBI Taxonomy" id="595496"/>
    <lineage>
        <taxon>Bacteria</taxon>
        <taxon>Pseudomonadati</taxon>
        <taxon>Pseudomonadota</taxon>
        <taxon>Gammaproteobacteria</taxon>
        <taxon>Enterobacterales</taxon>
        <taxon>Enterobacteriaceae</taxon>
        <taxon>Escherichia</taxon>
    </lineage>
</organism>
<evidence type="ECO:0000255" key="1">
    <source>
        <dbReference type="HAMAP-Rule" id="MF_00200"/>
    </source>
</evidence>